<keyword id="KW-0175">Coiled coil</keyword>
<keyword id="KW-1017">Isopeptide bond</keyword>
<keyword id="KW-0833">Ubl conjugation pathway</keyword>
<dbReference type="EMBL" id="AP011115">
    <property type="protein sequence ID" value="BAH48830.1"/>
    <property type="molecule type" value="Genomic_DNA"/>
</dbReference>
<dbReference type="RefSeq" id="WP_005242990.1">
    <property type="nucleotide sequence ID" value="NC_012522.1"/>
</dbReference>
<dbReference type="SMR" id="C1ASP8"/>
<dbReference type="STRING" id="632772.ROP_05830"/>
<dbReference type="KEGG" id="rop:ROP_05830"/>
<dbReference type="PATRIC" id="fig|632772.20.peg.641"/>
<dbReference type="HOGENOM" id="CLU_183816_1_0_11"/>
<dbReference type="UniPathway" id="UPA00997"/>
<dbReference type="Proteomes" id="UP000002212">
    <property type="component" value="Chromosome"/>
</dbReference>
<dbReference type="GO" id="GO:0070628">
    <property type="term" value="F:proteasome binding"/>
    <property type="evidence" value="ECO:0007669"/>
    <property type="project" value="UniProtKB-UniRule"/>
</dbReference>
<dbReference type="GO" id="GO:0031386">
    <property type="term" value="F:protein tag activity"/>
    <property type="evidence" value="ECO:0007669"/>
    <property type="project" value="UniProtKB-UniRule"/>
</dbReference>
<dbReference type="GO" id="GO:0019941">
    <property type="term" value="P:modification-dependent protein catabolic process"/>
    <property type="evidence" value="ECO:0007669"/>
    <property type="project" value="UniProtKB-UniRule"/>
</dbReference>
<dbReference type="GO" id="GO:0010498">
    <property type="term" value="P:proteasomal protein catabolic process"/>
    <property type="evidence" value="ECO:0007669"/>
    <property type="project" value="UniProtKB-UniRule"/>
</dbReference>
<dbReference type="GO" id="GO:0070490">
    <property type="term" value="P:protein pupylation"/>
    <property type="evidence" value="ECO:0007669"/>
    <property type="project" value="UniProtKB-UniRule"/>
</dbReference>
<dbReference type="HAMAP" id="MF_02106">
    <property type="entry name" value="Pup"/>
    <property type="match status" value="1"/>
</dbReference>
<dbReference type="InterPro" id="IPR008515">
    <property type="entry name" value="Ubiquitin-like_Pup"/>
</dbReference>
<dbReference type="NCBIfam" id="TIGR03687">
    <property type="entry name" value="pupylate_cterm"/>
    <property type="match status" value="1"/>
</dbReference>
<dbReference type="Pfam" id="PF05639">
    <property type="entry name" value="Pup"/>
    <property type="match status" value="1"/>
</dbReference>
<protein>
    <recommendedName>
        <fullName evidence="1">Prokaryotic ubiquitin-like protein Pup</fullName>
    </recommendedName>
    <alternativeName>
        <fullName evidence="1">Bacterial ubiquitin-like modifier</fullName>
    </alternativeName>
</protein>
<feature type="chain" id="PRO_0000390607" description="Prokaryotic ubiquitin-like protein Pup">
    <location>
        <begin position="1"/>
        <end position="64"/>
    </location>
</feature>
<feature type="region of interest" description="Disordered" evidence="2">
    <location>
        <begin position="1"/>
        <end position="38"/>
    </location>
</feature>
<feature type="region of interest" description="ARC ATPase binding" evidence="1">
    <location>
        <begin position="21"/>
        <end position="58"/>
    </location>
</feature>
<feature type="coiled-coil region" evidence="1">
    <location>
        <begin position="24"/>
        <end position="52"/>
    </location>
</feature>
<feature type="compositionally biased region" description="Basic and acidic residues" evidence="2">
    <location>
        <begin position="1"/>
        <end position="11"/>
    </location>
</feature>
<feature type="modified residue" description="Deamidated glutamine" evidence="1">
    <location>
        <position position="64"/>
    </location>
</feature>
<feature type="cross-link" description="Isoglutamyl lysine isopeptide (Gln-Lys) (interchain with K-? in acceptor proteins)" evidence="1">
    <location>
        <position position="64"/>
    </location>
</feature>
<accession>C1ASP8</accession>
<evidence type="ECO:0000255" key="1">
    <source>
        <dbReference type="HAMAP-Rule" id="MF_02106"/>
    </source>
</evidence>
<evidence type="ECO:0000256" key="2">
    <source>
        <dbReference type="SAM" id="MobiDB-lite"/>
    </source>
</evidence>
<proteinExistence type="inferred from homology"/>
<organism>
    <name type="scientific">Rhodococcus opacus (strain B4)</name>
    <dbReference type="NCBI Taxonomy" id="632772"/>
    <lineage>
        <taxon>Bacteria</taxon>
        <taxon>Bacillati</taxon>
        <taxon>Actinomycetota</taxon>
        <taxon>Actinomycetes</taxon>
        <taxon>Mycobacteriales</taxon>
        <taxon>Nocardiaceae</taxon>
        <taxon>Rhodococcus</taxon>
    </lineage>
</organism>
<name>PUP_RHOOB</name>
<sequence>MAQEQTKRTGGGDEDDTPGGDGAAGQERREKLAEDTDDLLDEIDDVLEENAEDFVRAYVQKGGQ</sequence>
<gene>
    <name evidence="1" type="primary">pup</name>
    <name type="ordered locus">ROP_05830</name>
</gene>
<reference key="1">
    <citation type="submission" date="2009-03" db="EMBL/GenBank/DDBJ databases">
        <title>Comparison of the complete genome sequences of Rhodococcus erythropolis PR4 and Rhodococcus opacus B4.</title>
        <authorList>
            <person name="Takarada H."/>
            <person name="Sekine M."/>
            <person name="Hosoyama A."/>
            <person name="Yamada R."/>
            <person name="Fujisawa T."/>
            <person name="Omata S."/>
            <person name="Shimizu A."/>
            <person name="Tsukatani N."/>
            <person name="Tanikawa S."/>
            <person name="Fujita N."/>
            <person name="Harayama S."/>
        </authorList>
    </citation>
    <scope>NUCLEOTIDE SEQUENCE [LARGE SCALE GENOMIC DNA]</scope>
    <source>
        <strain>B4</strain>
    </source>
</reference>
<comment type="function">
    <text evidence="1">Protein modifier that is covalently attached to lysine residues of substrate proteins, thereby targeting them for proteasomal degradation. The tagging system is termed pupylation.</text>
</comment>
<comment type="pathway">
    <text evidence="1">Protein degradation; proteasomal Pup-dependent pathway.</text>
</comment>
<comment type="subunit">
    <text evidence="1">Strongly interacts with the proteasome-associated ATPase ARC through a hydrophobic interface; the interacting region of Pup lies in its C-terminal half. There is one Pup binding site per ARC hexamer ring.</text>
</comment>
<comment type="domain">
    <text evidence="1">The N-terminal unstructured half of Pup provides a signal required to initiate unfolding and degradation by the proteasome but is not needed for pupylation, while the C-terminal helical half of Pup interacts with ARC to target proteins to the proteasome.</text>
</comment>
<comment type="PTM">
    <text evidence="1">Is modified by deamidation of its C-terminal glutamine to glutamate by the deamidase Dop, a prerequisite to the subsequent pupylation process.</text>
</comment>
<comment type="similarity">
    <text evidence="1">Belongs to the prokaryotic ubiquitin-like protein family.</text>
</comment>